<feature type="chain" id="PRO_0000100796" description="Phosphoribosylaminoimidazole-succinocarboxamide synthase">
    <location>
        <begin position="1"/>
        <end position="245"/>
    </location>
</feature>
<sequence length="245" mass="27740">MSVHSKLYEGKAKILYTTDEPEVLLADFKDDATAFNAQKRGSIIGKGRINCSISSQLFQQLEASGIKTHFIDSPAPNQMRVKAVKIIPLEVVIRNIAAGSLSQQTGIELGTVLKQPLVEFYYKNDQLGDPLLTRDRLLLMELATAEQVEEITHLALQINDFLKNFWQNCGITLVDFKLEFGLDSQQQILLADEISPDTCRLWNTTEADPNRRVMDKDRFRRDLGNVEDAYQEVLQRVLTAVEIKN</sequence>
<accession>Q8YUR7</accession>
<dbReference type="EC" id="6.3.2.6" evidence="1"/>
<dbReference type="EMBL" id="BA000019">
    <property type="protein sequence ID" value="BAB73967.1"/>
    <property type="molecule type" value="Genomic_DNA"/>
</dbReference>
<dbReference type="PIR" id="AE2089">
    <property type="entry name" value="AE2089"/>
</dbReference>
<dbReference type="RefSeq" id="WP_010996425.1">
    <property type="nucleotide sequence ID" value="NZ_RSCN01000004.1"/>
</dbReference>
<dbReference type="SMR" id="Q8YUR7"/>
<dbReference type="STRING" id="103690.gene:10494297"/>
<dbReference type="KEGG" id="ana:alr2268"/>
<dbReference type="eggNOG" id="COG0152">
    <property type="taxonomic scope" value="Bacteria"/>
</dbReference>
<dbReference type="OrthoDB" id="9801549at2"/>
<dbReference type="UniPathway" id="UPA00074">
    <property type="reaction ID" value="UER00131"/>
</dbReference>
<dbReference type="Proteomes" id="UP000002483">
    <property type="component" value="Chromosome"/>
</dbReference>
<dbReference type="GO" id="GO:0005524">
    <property type="term" value="F:ATP binding"/>
    <property type="evidence" value="ECO:0007669"/>
    <property type="project" value="UniProtKB-KW"/>
</dbReference>
<dbReference type="GO" id="GO:0004639">
    <property type="term" value="F:phosphoribosylaminoimidazolesuccinocarboxamide synthase activity"/>
    <property type="evidence" value="ECO:0007669"/>
    <property type="project" value="UniProtKB-UniRule"/>
</dbReference>
<dbReference type="GO" id="GO:0006189">
    <property type="term" value="P:'de novo' IMP biosynthetic process"/>
    <property type="evidence" value="ECO:0007669"/>
    <property type="project" value="UniProtKB-UniRule"/>
</dbReference>
<dbReference type="GO" id="GO:0009236">
    <property type="term" value="P:cobalamin biosynthetic process"/>
    <property type="evidence" value="ECO:0007669"/>
    <property type="project" value="InterPro"/>
</dbReference>
<dbReference type="CDD" id="cd01415">
    <property type="entry name" value="SAICAR_synt_PurC"/>
    <property type="match status" value="1"/>
</dbReference>
<dbReference type="FunFam" id="3.30.470.20:FF:000006">
    <property type="entry name" value="Phosphoribosylaminoimidazole-succinocarboxamide synthase"/>
    <property type="match status" value="1"/>
</dbReference>
<dbReference type="Gene3D" id="3.30.470.20">
    <property type="entry name" value="ATP-grasp fold, B domain"/>
    <property type="match status" value="1"/>
</dbReference>
<dbReference type="Gene3D" id="3.30.200.20">
    <property type="entry name" value="Phosphorylase Kinase, domain 1"/>
    <property type="match status" value="1"/>
</dbReference>
<dbReference type="HAMAP" id="MF_00137">
    <property type="entry name" value="SAICAR_synth"/>
    <property type="match status" value="1"/>
</dbReference>
<dbReference type="InterPro" id="IPR028923">
    <property type="entry name" value="SAICAR_synt/ADE2_N"/>
</dbReference>
<dbReference type="InterPro" id="IPR033934">
    <property type="entry name" value="SAICAR_synt_PurC"/>
</dbReference>
<dbReference type="InterPro" id="IPR001636">
    <property type="entry name" value="SAICAR_synth"/>
</dbReference>
<dbReference type="InterPro" id="IPR050089">
    <property type="entry name" value="SAICAR_synthetase"/>
</dbReference>
<dbReference type="InterPro" id="IPR018236">
    <property type="entry name" value="SAICAR_synthetase_CS"/>
</dbReference>
<dbReference type="NCBIfam" id="TIGR00081">
    <property type="entry name" value="purC"/>
    <property type="match status" value="1"/>
</dbReference>
<dbReference type="PANTHER" id="PTHR43599">
    <property type="entry name" value="MULTIFUNCTIONAL PROTEIN ADE2"/>
    <property type="match status" value="1"/>
</dbReference>
<dbReference type="PANTHER" id="PTHR43599:SF3">
    <property type="entry name" value="SI:DKEY-6E2.2"/>
    <property type="match status" value="1"/>
</dbReference>
<dbReference type="Pfam" id="PF01259">
    <property type="entry name" value="SAICAR_synt"/>
    <property type="match status" value="1"/>
</dbReference>
<dbReference type="SUPFAM" id="SSF56104">
    <property type="entry name" value="SAICAR synthase-like"/>
    <property type="match status" value="1"/>
</dbReference>
<dbReference type="PROSITE" id="PS01057">
    <property type="entry name" value="SAICAR_SYNTHETASE_1"/>
    <property type="match status" value="1"/>
</dbReference>
<dbReference type="PROSITE" id="PS01058">
    <property type="entry name" value="SAICAR_SYNTHETASE_2"/>
    <property type="match status" value="1"/>
</dbReference>
<gene>
    <name evidence="1" type="primary">purC</name>
    <name type="ordered locus">alr2268</name>
</gene>
<protein>
    <recommendedName>
        <fullName evidence="1">Phosphoribosylaminoimidazole-succinocarboxamide synthase</fullName>
        <ecNumber evidence="1">6.3.2.6</ecNumber>
    </recommendedName>
    <alternativeName>
        <fullName evidence="1">SAICAR synthetase</fullName>
    </alternativeName>
</protein>
<reference key="1">
    <citation type="journal article" date="2001" name="DNA Res.">
        <title>Complete genomic sequence of the filamentous nitrogen-fixing cyanobacterium Anabaena sp. strain PCC 7120.</title>
        <authorList>
            <person name="Kaneko T."/>
            <person name="Nakamura Y."/>
            <person name="Wolk C.P."/>
            <person name="Kuritz T."/>
            <person name="Sasamoto S."/>
            <person name="Watanabe A."/>
            <person name="Iriguchi M."/>
            <person name="Ishikawa A."/>
            <person name="Kawashima K."/>
            <person name="Kimura T."/>
            <person name="Kishida Y."/>
            <person name="Kohara M."/>
            <person name="Matsumoto M."/>
            <person name="Matsuno A."/>
            <person name="Muraki A."/>
            <person name="Nakazaki N."/>
            <person name="Shimpo S."/>
            <person name="Sugimoto M."/>
            <person name="Takazawa M."/>
            <person name="Yamada M."/>
            <person name="Yasuda M."/>
            <person name="Tabata S."/>
        </authorList>
    </citation>
    <scope>NUCLEOTIDE SEQUENCE [LARGE SCALE GENOMIC DNA]</scope>
    <source>
        <strain>PCC 7120 / SAG 25.82 / UTEX 2576</strain>
    </source>
</reference>
<keyword id="KW-0067">ATP-binding</keyword>
<keyword id="KW-0436">Ligase</keyword>
<keyword id="KW-0547">Nucleotide-binding</keyword>
<keyword id="KW-0658">Purine biosynthesis</keyword>
<keyword id="KW-1185">Reference proteome</keyword>
<organism>
    <name type="scientific">Nostoc sp. (strain PCC 7120 / SAG 25.82 / UTEX 2576)</name>
    <dbReference type="NCBI Taxonomy" id="103690"/>
    <lineage>
        <taxon>Bacteria</taxon>
        <taxon>Bacillati</taxon>
        <taxon>Cyanobacteriota</taxon>
        <taxon>Cyanophyceae</taxon>
        <taxon>Nostocales</taxon>
        <taxon>Nostocaceae</taxon>
        <taxon>Nostoc</taxon>
    </lineage>
</organism>
<name>PUR7_NOSS1</name>
<comment type="catalytic activity">
    <reaction evidence="1">
        <text>5-amino-1-(5-phospho-D-ribosyl)imidazole-4-carboxylate + L-aspartate + ATP = (2S)-2-[5-amino-1-(5-phospho-beta-D-ribosyl)imidazole-4-carboxamido]succinate + ADP + phosphate + 2 H(+)</text>
        <dbReference type="Rhea" id="RHEA:22628"/>
        <dbReference type="ChEBI" id="CHEBI:15378"/>
        <dbReference type="ChEBI" id="CHEBI:29991"/>
        <dbReference type="ChEBI" id="CHEBI:30616"/>
        <dbReference type="ChEBI" id="CHEBI:43474"/>
        <dbReference type="ChEBI" id="CHEBI:58443"/>
        <dbReference type="ChEBI" id="CHEBI:77657"/>
        <dbReference type="ChEBI" id="CHEBI:456216"/>
        <dbReference type="EC" id="6.3.2.6"/>
    </reaction>
</comment>
<comment type="pathway">
    <text evidence="1">Purine metabolism; IMP biosynthesis via de novo pathway; 5-amino-1-(5-phospho-D-ribosyl)imidazole-4-carboxamide from 5-amino-1-(5-phospho-D-ribosyl)imidazole-4-carboxylate: step 1/2.</text>
</comment>
<comment type="similarity">
    <text evidence="1">Belongs to the SAICAR synthetase family.</text>
</comment>
<proteinExistence type="inferred from homology"/>
<evidence type="ECO:0000255" key="1">
    <source>
        <dbReference type="HAMAP-Rule" id="MF_00137"/>
    </source>
</evidence>